<proteinExistence type="inferred from homology"/>
<keyword id="KW-1003">Cell membrane</keyword>
<keyword id="KW-0472">Membrane</keyword>
<keyword id="KW-0812">Transmembrane</keyword>
<keyword id="KW-1133">Transmembrane helix</keyword>
<feature type="chain" id="PRO_0000291285" description="UPF0182 protein MUL_2505">
    <location>
        <begin position="1"/>
        <end position="995"/>
    </location>
</feature>
<feature type="transmembrane region" description="Helical" evidence="1">
    <location>
        <begin position="18"/>
        <end position="38"/>
    </location>
</feature>
<feature type="transmembrane region" description="Helical" evidence="1">
    <location>
        <begin position="63"/>
        <end position="83"/>
    </location>
</feature>
<feature type="transmembrane region" description="Helical" evidence="1">
    <location>
        <begin position="113"/>
        <end position="133"/>
    </location>
</feature>
<feature type="transmembrane region" description="Helical" evidence="1">
    <location>
        <begin position="175"/>
        <end position="195"/>
    </location>
</feature>
<feature type="transmembrane region" description="Helical" evidence="1">
    <location>
        <begin position="210"/>
        <end position="230"/>
    </location>
</feature>
<feature type="transmembrane region" description="Helical" evidence="1">
    <location>
        <begin position="259"/>
        <end position="279"/>
    </location>
</feature>
<feature type="transmembrane region" description="Helical" evidence="1">
    <location>
        <begin position="287"/>
        <end position="307"/>
    </location>
</feature>
<feature type="region of interest" description="Disordered" evidence="2">
    <location>
        <begin position="900"/>
        <end position="947"/>
    </location>
</feature>
<feature type="compositionally biased region" description="Pro residues" evidence="2">
    <location>
        <begin position="928"/>
        <end position="941"/>
    </location>
</feature>
<comment type="subcellular location">
    <subcellularLocation>
        <location evidence="1">Cell membrane</location>
        <topology evidence="1">Multi-pass membrane protein</topology>
    </subcellularLocation>
</comment>
<comment type="similarity">
    <text evidence="1">Belongs to the UPF0182 family.</text>
</comment>
<organism>
    <name type="scientific">Mycobacterium ulcerans (strain Agy99)</name>
    <dbReference type="NCBI Taxonomy" id="362242"/>
    <lineage>
        <taxon>Bacteria</taxon>
        <taxon>Bacillati</taxon>
        <taxon>Actinomycetota</taxon>
        <taxon>Actinomycetes</taxon>
        <taxon>Mycobacteriales</taxon>
        <taxon>Mycobacteriaceae</taxon>
        <taxon>Mycobacterium</taxon>
        <taxon>Mycobacterium ulcerans group</taxon>
    </lineage>
</organism>
<reference key="1">
    <citation type="journal article" date="2007" name="Genome Res.">
        <title>Reductive evolution and niche adaptation inferred from the genome of Mycobacterium ulcerans, the causative agent of Buruli ulcer.</title>
        <authorList>
            <person name="Stinear T.P."/>
            <person name="Seemann T."/>
            <person name="Pidot S."/>
            <person name="Frigui W."/>
            <person name="Reysset G."/>
            <person name="Garnier T."/>
            <person name="Meurice G."/>
            <person name="Simon D."/>
            <person name="Bouchier C."/>
            <person name="Ma L."/>
            <person name="Tichit M."/>
            <person name="Porter J.L."/>
            <person name="Ryan J."/>
            <person name="Johnson P.D.R."/>
            <person name="Davies J.K."/>
            <person name="Jenkin G.A."/>
            <person name="Small P.L.C."/>
            <person name="Jones L.M."/>
            <person name="Tekaia F."/>
            <person name="Laval F."/>
            <person name="Daffe M."/>
            <person name="Parkhill J."/>
            <person name="Cole S.T."/>
        </authorList>
    </citation>
    <scope>NUCLEOTIDE SEQUENCE [LARGE SCALE GENOMIC DNA]</scope>
    <source>
        <strain>Agy99</strain>
    </source>
</reference>
<gene>
    <name type="ordered locus">MUL_2505</name>
</gene>
<dbReference type="EMBL" id="CP000325">
    <property type="protein sequence ID" value="ABL04848.1"/>
    <property type="molecule type" value="Genomic_DNA"/>
</dbReference>
<dbReference type="RefSeq" id="WP_011740463.1">
    <property type="nucleotide sequence ID" value="NC_008611.1"/>
</dbReference>
<dbReference type="SMR" id="A0PR79"/>
<dbReference type="KEGG" id="mul:MUL_2505"/>
<dbReference type="eggNOG" id="COG1615">
    <property type="taxonomic scope" value="Bacteria"/>
</dbReference>
<dbReference type="HOGENOM" id="CLU_007733_1_0_11"/>
<dbReference type="Proteomes" id="UP000000765">
    <property type="component" value="Chromosome"/>
</dbReference>
<dbReference type="GO" id="GO:0005576">
    <property type="term" value="C:extracellular region"/>
    <property type="evidence" value="ECO:0007669"/>
    <property type="project" value="TreeGrafter"/>
</dbReference>
<dbReference type="GO" id="GO:0005886">
    <property type="term" value="C:plasma membrane"/>
    <property type="evidence" value="ECO:0007669"/>
    <property type="project" value="UniProtKB-SubCell"/>
</dbReference>
<dbReference type="HAMAP" id="MF_01600">
    <property type="entry name" value="UPF0182"/>
    <property type="match status" value="1"/>
</dbReference>
<dbReference type="InterPro" id="IPR005372">
    <property type="entry name" value="UPF0182"/>
</dbReference>
<dbReference type="NCBIfam" id="NF000825">
    <property type="entry name" value="PRK00068.1"/>
    <property type="match status" value="1"/>
</dbReference>
<dbReference type="NCBIfam" id="NF009097">
    <property type="entry name" value="PRK12438.1"/>
    <property type="match status" value="1"/>
</dbReference>
<dbReference type="PANTHER" id="PTHR39344">
    <property type="entry name" value="UPF0182 PROTEIN SLL1060"/>
    <property type="match status" value="1"/>
</dbReference>
<dbReference type="PANTHER" id="PTHR39344:SF1">
    <property type="entry name" value="UPF0182 PROTEIN SLL1060"/>
    <property type="match status" value="1"/>
</dbReference>
<dbReference type="Pfam" id="PF03699">
    <property type="entry name" value="UPF0182"/>
    <property type="match status" value="1"/>
</dbReference>
<name>Y2505_MYCUA</name>
<accession>A0PR79</accession>
<evidence type="ECO:0000255" key="1">
    <source>
        <dbReference type="HAMAP-Rule" id="MF_01600"/>
    </source>
</evidence>
<evidence type="ECO:0000256" key="2">
    <source>
        <dbReference type="SAM" id="MobiDB-lite"/>
    </source>
</evidence>
<sequence>MGMRPTARMPKLTRRSRVLILIALGVIALLLAGPRLIDAYVDWLWFGELGYLSVFTTVLVTRFLVFLVAGVLVGGIVFAGLALAYRTRPVFVPNNDNDPVARYRTVVLARLRLFGIGIPAAIGLLAGIVAQSYWVRIQLFLHGGDFGITDPQFGKDLGFYAFELPFYRLLLSYLFVAIFLAFVANVVSHYLFGGIRLTGRSGALSRSARIQLVSLVGVLVLLKTVAYWLNRYELLSHTRGGKPFTGAGYTDINAVLPAKLILMAIAVICAAAVFSAIVLRDLRIPAIGLVLLLLSSLIVGAAWPMIVEQISVKPNAAQKESEYISRSITATRQAYGLTSNVVTYRNYTGDGEATAQQVAADRATTSNIRLLDPTIVSPAFTQFQQGKNFYYFPDQLSIDRYFDRNNNLRDYVVAARELNPDRLIDNQRDWINRHTVYTHGNGFIASPANTVRGIANDPNQNGGYPEFLVNVVGANGTVVSDGPAPLDQPRIYYGPVISNTPADYAIVGKTGADREYDYETSADTKNYTYTGSGGVSVGSWISRTVFAAKFAERNFLFSNVIGSNSKILFNRDPAQRVEAVAPWLTTDSAVYPAIVNKRMVWILDGYTTLDNYPYSQLTSLSSATADSNEVAFNRLLPDKQVSYIRNSVKATVDAYDGTVTLYQQDEQDPVLKAWMQVFPGTVKPKGDISPELAAHLRYPEDLFKVQRMLLAKYHVNDPVTFFSTSDFWDVPLDPNPTASSYQPPYYIVAKNIAKNDNSASYQLISAMNRFKRDYLAAYISASSDPATYGKITVLTIPGQVNGPKLANNAITTDPAVSQDLGVIGRDNQNRIRWGNLLTLPVGQGGLLYVEPVYASPGASDAASSYPRLIRVAMMYNDKIGYGPTVRDALNGLFGPGAGDAATGIQPTEGGAPANVPPNNAPSPEALPGTPPSPPTAVPPAPEASVTLSPARAAAMKEIQSAIGAARDAQKKGDFAAYGAALQRLDDAITKFNNTQ</sequence>
<protein>
    <recommendedName>
        <fullName evidence="1">UPF0182 protein MUL_2505</fullName>
    </recommendedName>
</protein>